<name>AQP_HAEIX</name>
<comment type="function">
    <text evidence="1">Forms a water-specific channel.</text>
</comment>
<comment type="subunit">
    <text evidence="1">Homotetramer.</text>
</comment>
<comment type="subcellular location">
    <subcellularLocation>
        <location>Membrane</location>
        <topology>Multi-pass membrane protein</topology>
    </subcellularLocation>
</comment>
<comment type="domain">
    <text>Aquaporins contain two tandem repeats each containing three membrane-spanning domains and a pore-forming loop with the signature motif Asn-Pro-Ala (NPA).</text>
</comment>
<comment type="similarity">
    <text evidence="3">Belongs to the MIP/aquaporin (TC 1.A.8) family.</text>
</comment>
<proteinExistence type="evidence at transcript level"/>
<reference key="1">
    <citation type="journal article" date="1999" name="Insect Mol. Biol.">
        <title>Molecular cloning and expression in Escherichia coli of an aquaporin-like gene from adult buffalo fly (Haematobia irritans exigua).</title>
        <authorList>
            <person name="Elvin C.M."/>
            <person name="Bunch R."/>
            <person name="Liyou N.E."/>
            <person name="Pearson R.D."/>
            <person name="Gough J."/>
            <person name="Drinkwater R.D."/>
        </authorList>
    </citation>
    <scope>NUCLEOTIDE SEQUENCE [MRNA]</scope>
</reference>
<organism>
    <name type="scientific">Haematobia irritans exigua</name>
    <name type="common">Buffalo fly</name>
    <dbReference type="NCBI Taxonomy" id="34678"/>
    <lineage>
        <taxon>Eukaryota</taxon>
        <taxon>Metazoa</taxon>
        <taxon>Ecdysozoa</taxon>
        <taxon>Arthropoda</taxon>
        <taxon>Hexapoda</taxon>
        <taxon>Insecta</taxon>
        <taxon>Pterygota</taxon>
        <taxon>Neoptera</taxon>
        <taxon>Endopterygota</taxon>
        <taxon>Diptera</taxon>
        <taxon>Brachycera</taxon>
        <taxon>Muscomorpha</taxon>
        <taxon>Muscoidea</taxon>
        <taxon>Muscidae</taxon>
        <taxon>Haematobia</taxon>
    </lineage>
</organism>
<protein>
    <recommendedName>
        <fullName>Aquaporin</fullName>
    </recommendedName>
    <alternativeName>
        <fullName>BfWC1</fullName>
    </alternativeName>
    <alternativeName>
        <fullName>Water channel 1</fullName>
    </alternativeName>
</protein>
<keyword id="KW-0472">Membrane</keyword>
<keyword id="KW-0677">Repeat</keyword>
<keyword id="KW-0812">Transmembrane</keyword>
<keyword id="KW-1133">Transmembrane helix</keyword>
<keyword id="KW-0813">Transport</keyword>
<accession>Q25074</accession>
<feature type="chain" id="PRO_0000063977" description="Aquaporin">
    <location>
        <begin position="1"/>
        <end position="251"/>
    </location>
</feature>
<feature type="topological domain" description="Cytoplasmic" evidence="2">
    <location>
        <begin position="1"/>
        <end position="26"/>
    </location>
</feature>
<feature type="transmembrane region" description="Helical; Name=1" evidence="2">
    <location>
        <begin position="27"/>
        <end position="46"/>
    </location>
</feature>
<feature type="topological domain" description="Extracellular" evidence="2">
    <location>
        <begin position="47"/>
        <end position="56"/>
    </location>
</feature>
<feature type="transmembrane region" description="Helical; Name=2" evidence="2">
    <location>
        <begin position="57"/>
        <end position="77"/>
    </location>
</feature>
<feature type="topological domain" description="Cytoplasmic" evidence="2">
    <location>
        <begin position="78"/>
        <end position="99"/>
    </location>
</feature>
<feature type="transmembrane region" description="Helical; Name=3" evidence="2">
    <location>
        <begin position="100"/>
        <end position="120"/>
    </location>
</feature>
<feature type="topological domain" description="Extracellular" evidence="2">
    <location>
        <begin position="121"/>
        <end position="138"/>
    </location>
</feature>
<feature type="transmembrane region" description="Helical; Name=4" evidence="2">
    <location>
        <begin position="139"/>
        <end position="159"/>
    </location>
</feature>
<feature type="topological domain" description="Cytoplasmic" evidence="2">
    <location>
        <begin position="160"/>
        <end position="169"/>
    </location>
</feature>
<feature type="transmembrane region" description="Helical; Name=5" evidence="2">
    <location>
        <begin position="170"/>
        <end position="190"/>
    </location>
</feature>
<feature type="topological domain" description="Extracellular" evidence="2">
    <location>
        <begin position="191"/>
        <end position="211"/>
    </location>
</feature>
<feature type="transmembrane region" description="Helical; Name=6" evidence="2">
    <location>
        <begin position="212"/>
        <end position="232"/>
    </location>
</feature>
<feature type="topological domain" description="Cytoplasmic" evidence="2">
    <location>
        <begin position="233"/>
        <end position="251"/>
    </location>
</feature>
<feature type="short sequence motif" description="NPA 1">
    <location>
        <begin position="81"/>
        <end position="83"/>
    </location>
</feature>
<feature type="short sequence motif" description="NPA 2">
    <location>
        <begin position="198"/>
        <end position="200"/>
    </location>
</feature>
<dbReference type="EMBL" id="U51638">
    <property type="protein sequence ID" value="AAA96783.1"/>
    <property type="molecule type" value="mRNA"/>
</dbReference>
<dbReference type="SMR" id="Q25074"/>
<dbReference type="GO" id="GO:0005886">
    <property type="term" value="C:plasma membrane"/>
    <property type="evidence" value="ECO:0007669"/>
    <property type="project" value="TreeGrafter"/>
</dbReference>
<dbReference type="GO" id="GO:0015267">
    <property type="term" value="F:channel activity"/>
    <property type="evidence" value="ECO:0007669"/>
    <property type="project" value="InterPro"/>
</dbReference>
<dbReference type="CDD" id="cd00333">
    <property type="entry name" value="MIP"/>
    <property type="match status" value="1"/>
</dbReference>
<dbReference type="FunFam" id="1.20.1080.10:FF:000009">
    <property type="entry name" value="aquaporin-4 isoform X1"/>
    <property type="match status" value="1"/>
</dbReference>
<dbReference type="Gene3D" id="1.20.1080.10">
    <property type="entry name" value="Glycerol uptake facilitator protein"/>
    <property type="match status" value="1"/>
</dbReference>
<dbReference type="InterPro" id="IPR023271">
    <property type="entry name" value="Aquaporin-like"/>
</dbReference>
<dbReference type="InterPro" id="IPR034294">
    <property type="entry name" value="Aquaporin_transptr"/>
</dbReference>
<dbReference type="InterPro" id="IPR000425">
    <property type="entry name" value="MIP"/>
</dbReference>
<dbReference type="InterPro" id="IPR022357">
    <property type="entry name" value="MIP_CS"/>
</dbReference>
<dbReference type="NCBIfam" id="TIGR00861">
    <property type="entry name" value="MIP"/>
    <property type="match status" value="1"/>
</dbReference>
<dbReference type="PANTHER" id="PTHR19139:SF291">
    <property type="entry name" value="AQUAPORIN"/>
    <property type="match status" value="1"/>
</dbReference>
<dbReference type="PANTHER" id="PTHR19139">
    <property type="entry name" value="AQUAPORIN TRANSPORTER"/>
    <property type="match status" value="1"/>
</dbReference>
<dbReference type="Pfam" id="PF00230">
    <property type="entry name" value="MIP"/>
    <property type="match status" value="1"/>
</dbReference>
<dbReference type="PRINTS" id="PR00783">
    <property type="entry name" value="MINTRINSICP"/>
</dbReference>
<dbReference type="SUPFAM" id="SSF81338">
    <property type="entry name" value="Aquaporin-like"/>
    <property type="match status" value="1"/>
</dbReference>
<dbReference type="PROSITE" id="PS00221">
    <property type="entry name" value="MIP"/>
    <property type="match status" value="1"/>
</dbReference>
<evidence type="ECO:0000250" key="1"/>
<evidence type="ECO:0000255" key="2"/>
<evidence type="ECO:0000305" key="3"/>
<sequence>MVEKLDMSAVVGVKDITDNKKIWRQLMAELIGTFFLVVIGVGSCTGGSEWSPSIPQIAFTFGLTVATLAQAIGHISGCHINPAVTVGFLIVGEMSIIKSVLYIAVQCVGAIAGAAVIKVGVSEAVSGLDLGVSSFSSTLTVGQAVLIEALITFILVVVVKGVSDPGRTDIKGSAPLAVGLSIAAGHLCAIKLTGASMNPARSFGPAVVQNMWIDHWVYWVGPIVGAIVAALLYKFVFKVRKGDDEANSYDF</sequence>